<gene>
    <name type="ordered locus">YIL012W</name>
</gene>
<accession>P40551</accession>
<accession>A0A1S0T093</accession>
<organism>
    <name type="scientific">Saccharomyces cerevisiae (strain ATCC 204508 / S288c)</name>
    <name type="common">Baker's yeast</name>
    <dbReference type="NCBI Taxonomy" id="559292"/>
    <lineage>
        <taxon>Eukaryota</taxon>
        <taxon>Fungi</taxon>
        <taxon>Dikarya</taxon>
        <taxon>Ascomycota</taxon>
        <taxon>Saccharomycotina</taxon>
        <taxon>Saccharomycetes</taxon>
        <taxon>Saccharomycetales</taxon>
        <taxon>Saccharomycetaceae</taxon>
        <taxon>Saccharomyces</taxon>
    </lineage>
</organism>
<keyword id="KW-1185">Reference proteome</keyword>
<comment type="sequence caution" evidence="1">
    <conflict type="frameshift">
        <sequence resource="EMBL-CDS" id="CAA86237"/>
    </conflict>
</comment>
<protein>
    <recommendedName>
        <fullName>Uncharacterized protein YIL012W</fullName>
    </recommendedName>
</protein>
<proteinExistence type="predicted"/>
<feature type="chain" id="PRO_0000203001" description="Uncharacterized protein YIL012W">
    <location>
        <begin position="1"/>
        <end position="113"/>
    </location>
</feature>
<evidence type="ECO:0000305" key="1"/>
<name>YIB2_YEAST</name>
<dbReference type="EMBL" id="Z38113">
    <property type="protein sequence ID" value="CAA86237.1"/>
    <property type="status" value="ALT_FRAME"/>
    <property type="molecule type" value="Genomic_DNA"/>
</dbReference>
<dbReference type="EMBL" id="BK006942">
    <property type="protein sequence ID" value="DAA80305.1"/>
    <property type="molecule type" value="Genomic_DNA"/>
</dbReference>
<dbReference type="PIR" id="S48443">
    <property type="entry name" value="S48443"/>
</dbReference>
<dbReference type="RefSeq" id="NP_001335785.1">
    <property type="nucleotide sequence ID" value="NM_001348845.1"/>
</dbReference>
<dbReference type="FunCoup" id="P40551">
    <property type="interactions" value="18"/>
</dbReference>
<dbReference type="IntAct" id="P40551">
    <property type="interactions" value="2"/>
</dbReference>
<dbReference type="PaxDb" id="4932-YIL012W"/>
<dbReference type="EnsemblFungi" id="YIL012W_mRNA">
    <property type="protein sequence ID" value="YIL012W"/>
    <property type="gene ID" value="YIL012W"/>
</dbReference>
<dbReference type="GeneID" id="854803"/>
<dbReference type="AGR" id="SGD:S000001274"/>
<dbReference type="SGD" id="S000001274">
    <property type="gene designation" value="YIL012W"/>
</dbReference>
<dbReference type="HOGENOM" id="CLU_2135487_0_0_1"/>
<dbReference type="InParanoid" id="P40551"/>
<dbReference type="OrthoDB" id="10380539at2759"/>
<dbReference type="PRO" id="PR:P40551"/>
<dbReference type="Proteomes" id="UP000002311">
    <property type="component" value="Chromosome IX"/>
</dbReference>
<dbReference type="RNAct" id="P40551">
    <property type="molecule type" value="protein"/>
</dbReference>
<sequence length="113" mass="13235">MCLGKLYFEQLILVRCIKGRQSGNITTGESRCVSWNVYCTTSMIGLFSWRKMLLFQHFSYTQRENRQIGGKTWSLISSLFHLNETLASALHHPYETLALYEAYFALREKKFLL</sequence>
<reference key="1">
    <citation type="journal article" date="1997" name="Nature">
        <title>The nucleotide sequence of Saccharomyces cerevisiae chromosome IX.</title>
        <authorList>
            <person name="Churcher C.M."/>
            <person name="Bowman S."/>
            <person name="Badcock K."/>
            <person name="Bankier A.T."/>
            <person name="Brown D."/>
            <person name="Chillingworth T."/>
            <person name="Connor R."/>
            <person name="Devlin K."/>
            <person name="Gentles S."/>
            <person name="Hamlin N."/>
            <person name="Harris D.E."/>
            <person name="Horsnell T."/>
            <person name="Hunt S."/>
            <person name="Jagels K."/>
            <person name="Jones M."/>
            <person name="Lye G."/>
            <person name="Moule S."/>
            <person name="Odell C."/>
            <person name="Pearson D."/>
            <person name="Rajandream M.A."/>
            <person name="Rice P."/>
            <person name="Rowley N."/>
            <person name="Skelton J."/>
            <person name="Smith V."/>
            <person name="Walsh S.V."/>
            <person name="Whitehead S."/>
            <person name="Barrell B.G."/>
        </authorList>
    </citation>
    <scope>NUCLEOTIDE SEQUENCE [LARGE SCALE GENOMIC DNA]</scope>
    <source>
        <strain>ATCC 204508 / S288c</strain>
    </source>
</reference>
<reference key="2">
    <citation type="journal article" date="2014" name="G3 (Bethesda)">
        <title>The reference genome sequence of Saccharomyces cerevisiae: Then and now.</title>
        <authorList>
            <person name="Engel S.R."/>
            <person name="Dietrich F.S."/>
            <person name="Fisk D.G."/>
            <person name="Binkley G."/>
            <person name="Balakrishnan R."/>
            <person name="Costanzo M.C."/>
            <person name="Dwight S.S."/>
            <person name="Hitz B.C."/>
            <person name="Karra K."/>
            <person name="Nash R.S."/>
            <person name="Weng S."/>
            <person name="Wong E.D."/>
            <person name="Lloyd P."/>
            <person name="Skrzypek M.S."/>
            <person name="Miyasato S.R."/>
            <person name="Simison M."/>
            <person name="Cherry J.M."/>
        </authorList>
    </citation>
    <scope>GENOME REANNOTATION</scope>
    <scope>SEQUENCE REVISION TO 106</scope>
    <source>
        <strain>ATCC 204508 / S288c</strain>
    </source>
</reference>